<evidence type="ECO:0000255" key="1">
    <source>
        <dbReference type="PROSITE-ProRule" id="PRU00108"/>
    </source>
</evidence>
<evidence type="ECO:0000255" key="2">
    <source>
        <dbReference type="PROSITE-ProRule" id="PRU00559"/>
    </source>
</evidence>
<evidence type="ECO:0000305" key="3"/>
<protein>
    <recommendedName>
        <fullName>Homeobox protein knotted-1-like 7</fullName>
    </recommendedName>
</protein>
<proteinExistence type="evidence at transcript level"/>
<gene>
    <name type="primary">KNOX7</name>
</gene>
<organism>
    <name type="scientific">Zea mays</name>
    <name type="common">Maize</name>
    <dbReference type="NCBI Taxonomy" id="4577"/>
    <lineage>
        <taxon>Eukaryota</taxon>
        <taxon>Viridiplantae</taxon>
        <taxon>Streptophyta</taxon>
        <taxon>Embryophyta</taxon>
        <taxon>Tracheophyta</taxon>
        <taxon>Spermatophyta</taxon>
        <taxon>Magnoliopsida</taxon>
        <taxon>Liliopsida</taxon>
        <taxon>Poales</taxon>
        <taxon>Poaceae</taxon>
        <taxon>PACMAD clade</taxon>
        <taxon>Panicoideae</taxon>
        <taxon>Andropogonodae</taxon>
        <taxon>Andropogoneae</taxon>
        <taxon>Tripsacinae</taxon>
        <taxon>Zea</taxon>
    </lineage>
</organism>
<name>KNOX7_MAIZE</name>
<reference key="1">
    <citation type="journal article" date="1994" name="Plant Cell">
        <title>Sequence analysis and expression patterns divide the Maize knotted1-like homeobox genes into two classes.</title>
        <authorList>
            <person name="Kerstetter R."/>
            <person name="Vollbrecht E."/>
            <person name="Lowe B."/>
            <person name="Veit B."/>
            <person name="Yamaguchi J."/>
            <person name="Hake S."/>
        </authorList>
    </citation>
    <scope>NUCLEOTIDE SEQUENCE</scope>
    <source>
        <tissue>Ear of corn</tissue>
        <tissue>Seedling</tissue>
    </source>
</reference>
<accession>P56665</accession>
<sequence length="85" mass="10244">ELKNELKQGYKEKLVDIREEIMRKRRAGKLPGDTASVLKAWWQAHSKWPYPTEDDKARLVQETGLQLKQINNWFINQRKRNWHSN</sequence>
<comment type="subcellular location">
    <subcellularLocation>
        <location evidence="3">Nucleus</location>
    </subcellularLocation>
</comment>
<comment type="tissue specificity">
    <text>Expressed in all tissues examined. Highest expression in leaves.</text>
</comment>
<comment type="similarity">
    <text evidence="2">Belongs to the TALE/KNOX homeobox family.</text>
</comment>
<dbReference type="SMR" id="P56665"/>
<dbReference type="STRING" id="4577.P56665"/>
<dbReference type="InParanoid" id="P56665"/>
<dbReference type="Proteomes" id="UP000007305">
    <property type="component" value="Unplaced"/>
</dbReference>
<dbReference type="ExpressionAtlas" id="P56665">
    <property type="expression patterns" value="baseline and differential"/>
</dbReference>
<dbReference type="GO" id="GO:0005634">
    <property type="term" value="C:nucleus"/>
    <property type="evidence" value="ECO:0007669"/>
    <property type="project" value="UniProtKB-SubCell"/>
</dbReference>
<dbReference type="GO" id="GO:0003677">
    <property type="term" value="F:DNA binding"/>
    <property type="evidence" value="ECO:0007669"/>
    <property type="project" value="UniProtKB-KW"/>
</dbReference>
<dbReference type="GO" id="GO:0006355">
    <property type="term" value="P:regulation of DNA-templated transcription"/>
    <property type="evidence" value="ECO:0007669"/>
    <property type="project" value="InterPro"/>
</dbReference>
<dbReference type="CDD" id="cd00086">
    <property type="entry name" value="homeodomain"/>
    <property type="match status" value="1"/>
</dbReference>
<dbReference type="FunFam" id="1.10.10.60:FF:000143">
    <property type="entry name" value="homeobox protein knotted-1-like 3 isoform X1"/>
    <property type="match status" value="1"/>
</dbReference>
<dbReference type="Gene3D" id="1.10.10.60">
    <property type="entry name" value="Homeodomain-like"/>
    <property type="match status" value="1"/>
</dbReference>
<dbReference type="InterPro" id="IPR005539">
    <property type="entry name" value="ELK_dom"/>
</dbReference>
<dbReference type="InterPro" id="IPR001356">
    <property type="entry name" value="HD"/>
</dbReference>
<dbReference type="InterPro" id="IPR009057">
    <property type="entry name" value="Homeodomain-like_sf"/>
</dbReference>
<dbReference type="InterPro" id="IPR008422">
    <property type="entry name" value="KN_HD"/>
</dbReference>
<dbReference type="InterPro" id="IPR050224">
    <property type="entry name" value="TALE_homeobox"/>
</dbReference>
<dbReference type="PANTHER" id="PTHR11850">
    <property type="entry name" value="HOMEOBOX PROTEIN TRANSCRIPTION FACTORS"/>
    <property type="match status" value="1"/>
</dbReference>
<dbReference type="Pfam" id="PF03789">
    <property type="entry name" value="ELK"/>
    <property type="match status" value="1"/>
</dbReference>
<dbReference type="Pfam" id="PF05920">
    <property type="entry name" value="Homeobox_KN"/>
    <property type="match status" value="1"/>
</dbReference>
<dbReference type="SMART" id="SM01188">
    <property type="entry name" value="ELK"/>
    <property type="match status" value="1"/>
</dbReference>
<dbReference type="SMART" id="SM00389">
    <property type="entry name" value="HOX"/>
    <property type="match status" value="1"/>
</dbReference>
<dbReference type="SUPFAM" id="SSF46689">
    <property type="entry name" value="Homeodomain-like"/>
    <property type="match status" value="1"/>
</dbReference>
<dbReference type="PROSITE" id="PS51213">
    <property type="entry name" value="ELK"/>
    <property type="match status" value="1"/>
</dbReference>
<dbReference type="PROSITE" id="PS00027">
    <property type="entry name" value="HOMEOBOX_1"/>
    <property type="match status" value="1"/>
</dbReference>
<dbReference type="PROSITE" id="PS50071">
    <property type="entry name" value="HOMEOBOX_2"/>
    <property type="match status" value="1"/>
</dbReference>
<keyword id="KW-0238">DNA-binding</keyword>
<keyword id="KW-0371">Homeobox</keyword>
<keyword id="KW-0539">Nucleus</keyword>
<keyword id="KW-1185">Reference proteome</keyword>
<feature type="chain" id="PRO_0000048968" description="Homeobox protein knotted-1-like 7">
    <location>
        <begin position="1" status="less than"/>
        <end position="85" status="greater than"/>
    </location>
</feature>
<feature type="domain" description="ELK" evidence="2">
    <location>
        <begin position="1"/>
        <end position="21"/>
    </location>
</feature>
<feature type="DNA-binding region" description="Homeobox; TALE-type" evidence="1">
    <location>
        <begin position="22"/>
        <end position="85"/>
    </location>
</feature>
<feature type="non-terminal residue">
    <location>
        <position position="1"/>
    </location>
</feature>
<feature type="non-terminal residue">
    <location>
        <position position="85"/>
    </location>
</feature>